<dbReference type="EMBL" id="AF206304">
    <property type="protein sequence ID" value="AAF61661.1"/>
    <property type="molecule type" value="Genomic_DNA"/>
</dbReference>
<dbReference type="EMBL" id="AH010548">
    <property type="protein sequence ID" value="AAK19941.1"/>
    <property type="molecule type" value="Genomic_DNA"/>
</dbReference>
<dbReference type="EMBL" id="AB097932">
    <property type="status" value="NOT_ANNOTATED_CDS"/>
    <property type="molecule type" value="Genomic_DNA"/>
</dbReference>
<dbReference type="EMBL" id="AB097933">
    <property type="status" value="NOT_ANNOTATED_CDS"/>
    <property type="molecule type" value="Genomic_DNA"/>
</dbReference>
<dbReference type="EMBL" id="DQ008354">
    <property type="protein sequence ID" value="AAY57669.1"/>
    <property type="molecule type" value="Genomic_DNA"/>
</dbReference>
<dbReference type="EMBL" id="DQ008355">
    <property type="protein sequence ID" value="AAY57740.1"/>
    <property type="molecule type" value="Genomic_DNA"/>
</dbReference>
<dbReference type="PDB" id="4XHJ">
    <property type="method" value="X-ray"/>
    <property type="resolution" value="3.16 A"/>
    <property type="chains" value="B/F=23-160"/>
</dbReference>
<dbReference type="PDB" id="4XI5">
    <property type="method" value="X-ray"/>
    <property type="resolution" value="3.90 A"/>
    <property type="chains" value="B=23-160"/>
</dbReference>
<dbReference type="PDBsum" id="4XHJ"/>
<dbReference type="PDBsum" id="4XI5"/>
<dbReference type="SMR" id="Q9J3N1"/>
<dbReference type="IntAct" id="Q9J3N1">
    <property type="interactions" value="28"/>
</dbReference>
<dbReference type="ABCD" id="Q9J3N1">
    <property type="antibodies" value="2 sequenced antibodies"/>
</dbReference>
<dbReference type="EvolutionaryTrace" id="Q9J3N1"/>
<dbReference type="Proteomes" id="UP000002603">
    <property type="component" value="Genome"/>
</dbReference>
<dbReference type="Proteomes" id="UP000008504">
    <property type="component" value="Genome"/>
</dbReference>
<dbReference type="Proteomes" id="UP000008505">
    <property type="component" value="Genome"/>
</dbReference>
<dbReference type="Proteomes" id="UP000008506">
    <property type="component" value="Genome"/>
</dbReference>
<dbReference type="GO" id="GO:0044177">
    <property type="term" value="C:host cell Golgi apparatus"/>
    <property type="evidence" value="ECO:0007669"/>
    <property type="project" value="UniProtKB-SubCell"/>
</dbReference>
<dbReference type="GO" id="GO:0020002">
    <property type="term" value="C:host cell plasma membrane"/>
    <property type="evidence" value="ECO:0007669"/>
    <property type="project" value="UniProtKB-SubCell"/>
</dbReference>
<dbReference type="GO" id="GO:0016020">
    <property type="term" value="C:membrane"/>
    <property type="evidence" value="ECO:0007669"/>
    <property type="project" value="UniProtKB-KW"/>
</dbReference>
<dbReference type="GO" id="GO:0019031">
    <property type="term" value="C:viral envelope"/>
    <property type="evidence" value="ECO:0007669"/>
    <property type="project" value="UniProtKB-KW"/>
</dbReference>
<dbReference type="GO" id="GO:0055036">
    <property type="term" value="C:virion membrane"/>
    <property type="evidence" value="ECO:0007669"/>
    <property type="project" value="UniProtKB-SubCell"/>
</dbReference>
<dbReference type="GO" id="GO:0019064">
    <property type="term" value="P:fusion of virus membrane with host plasma membrane"/>
    <property type="evidence" value="ECO:0007669"/>
    <property type="project" value="UniProtKB-KW"/>
</dbReference>
<dbReference type="GO" id="GO:0046718">
    <property type="term" value="P:symbiont entry into host cell"/>
    <property type="evidence" value="ECO:0007669"/>
    <property type="project" value="UniProtKB-KW"/>
</dbReference>
<dbReference type="Gene3D" id="3.30.390.170">
    <property type="match status" value="1"/>
</dbReference>
<dbReference type="HAMAP" id="MF_04034">
    <property type="entry name" value="HSV_GL_alphagamma"/>
    <property type="match status" value="1"/>
</dbReference>
<dbReference type="InterPro" id="IPR007923">
    <property type="entry name" value="Herpes_gL_N"/>
</dbReference>
<dbReference type="InterPro" id="IPR038311">
    <property type="entry name" value="Herpes_gL_N_sf"/>
</dbReference>
<dbReference type="InterPro" id="IPR034708">
    <property type="entry name" value="HSV_GL_alphagamma"/>
</dbReference>
<dbReference type="Pfam" id="PF05259">
    <property type="entry name" value="Herpes_UL1"/>
    <property type="match status" value="1"/>
</dbReference>
<dbReference type="PROSITE" id="PS52024">
    <property type="entry name" value="GL_AHV"/>
    <property type="match status" value="1"/>
</dbReference>
<name>GL_VZVO</name>
<feature type="signal peptide" evidence="1">
    <location>
        <begin position="1"/>
        <end position="22"/>
    </location>
</feature>
<feature type="chain" id="PRO_0000385475" description="Envelope glycoprotein L" evidence="1">
    <location>
        <begin position="23"/>
        <end position="160"/>
    </location>
</feature>
<feature type="domain" description="gL alphaherpesvirus-type" evidence="2">
    <location>
        <begin position="28"/>
        <end position="160"/>
    </location>
</feature>
<feature type="region of interest" description="Interaction with gH" evidence="1">
    <location>
        <begin position="24"/>
        <end position="149"/>
    </location>
</feature>
<feature type="disulfide bond" evidence="2">
    <location>
        <begin position="49"/>
        <end position="80"/>
    </location>
</feature>
<feature type="disulfide bond" evidence="2">
    <location>
        <begin position="147"/>
        <end position="159"/>
    </location>
</feature>
<feature type="strand" evidence="3">
    <location>
        <begin position="34"/>
        <end position="37"/>
    </location>
</feature>
<feature type="strand" evidence="3">
    <location>
        <begin position="39"/>
        <end position="41"/>
    </location>
</feature>
<feature type="helix" evidence="3">
    <location>
        <begin position="42"/>
        <end position="46"/>
    </location>
</feature>
<feature type="helix" evidence="3">
    <location>
        <begin position="50"/>
        <end position="53"/>
    </location>
</feature>
<feature type="turn" evidence="3">
    <location>
        <begin position="68"/>
        <end position="70"/>
    </location>
</feature>
<feature type="strand" evidence="3">
    <location>
        <begin position="71"/>
        <end position="77"/>
    </location>
</feature>
<feature type="strand" evidence="3">
    <location>
        <begin position="79"/>
        <end position="82"/>
    </location>
</feature>
<feature type="strand" evidence="3">
    <location>
        <begin position="84"/>
        <end position="92"/>
    </location>
</feature>
<feature type="strand" evidence="3">
    <location>
        <begin position="94"/>
        <end position="98"/>
    </location>
</feature>
<feature type="helix" evidence="3">
    <location>
        <begin position="100"/>
        <end position="110"/>
    </location>
</feature>
<feature type="helix" evidence="3">
    <location>
        <begin position="119"/>
        <end position="127"/>
    </location>
</feature>
<feature type="strand" evidence="3">
    <location>
        <begin position="128"/>
        <end position="130"/>
    </location>
</feature>
<feature type="turn" evidence="3">
    <location>
        <begin position="131"/>
        <end position="133"/>
    </location>
</feature>
<feature type="turn" evidence="3">
    <location>
        <begin position="151"/>
        <end position="155"/>
    </location>
</feature>
<evidence type="ECO:0000255" key="1">
    <source>
        <dbReference type="HAMAP-Rule" id="MF_04034"/>
    </source>
</evidence>
<evidence type="ECO:0000255" key="2">
    <source>
        <dbReference type="PROSITE-ProRule" id="PRU01368"/>
    </source>
</evidence>
<evidence type="ECO:0007829" key="3">
    <source>
        <dbReference type="PDB" id="4XHJ"/>
    </source>
</evidence>
<gene>
    <name evidence="1" type="primary">gL</name>
    <name type="ORF">ORF60</name>
</gene>
<organism>
    <name type="scientific">Varicella-zoster virus (strain Oka vaccine)</name>
    <name type="common">HHV-3</name>
    <name type="synonym">Human herpesvirus 3</name>
    <dbReference type="NCBI Taxonomy" id="341980"/>
    <lineage>
        <taxon>Viruses</taxon>
        <taxon>Duplodnaviria</taxon>
        <taxon>Heunggongvirae</taxon>
        <taxon>Peploviricota</taxon>
        <taxon>Herviviricetes</taxon>
        <taxon>Herpesvirales</taxon>
        <taxon>Orthoherpesviridae</taxon>
        <taxon>Alphaherpesvirinae</taxon>
        <taxon>Varicellovirus</taxon>
        <taxon>Varicellovirus humanalpha3</taxon>
        <taxon>Human herpesvirus 3</taxon>
    </lineage>
</organism>
<reference key="1">
    <citation type="journal article" date="2000" name="J. Infect. Dis.">
        <title>Nucleotide sequences that distinguish Oka vaccine from parental Oka and other varicella-zoster virus isolates.</title>
        <authorList>
            <person name="Argaw T."/>
            <person name="Cohen J.I."/>
            <person name="Klutch M."/>
            <person name="Lekstrom K."/>
            <person name="Yoshikawa T."/>
            <person name="Asano Y."/>
            <person name="Krause P.R."/>
        </authorList>
    </citation>
    <scope>NUCLEOTIDE SEQUENCE [GENOMIC DNA]</scope>
    <source>
        <strain>Oka varicella vaccine Biken (V-Oka-Biken)</strain>
    </source>
</reference>
<reference key="2">
    <citation type="journal article" date="2001" name="Virology">
        <title>Identification and mapping of single nucleotide polymorphisms in the varicella-zoster virus genome.</title>
        <authorList>
            <person name="Faga B."/>
            <person name="Maury W."/>
            <person name="Bruckner D.A."/>
            <person name="Grose C."/>
        </authorList>
    </citation>
    <scope>NUCLEOTIDE SEQUENCE [GENOMIC DNA]</scope>
    <source>
        <strain>Oka varicella vaccine Biken (V-Oka-Biken)</strain>
    </source>
</reference>
<reference key="3">
    <citation type="journal article" date="2002" name="J. Virol.">
        <title>Comparison of the complete DNA sequences of the Oka varicella vaccine and its parental virus.</title>
        <authorList>
            <person name="Gomi Y."/>
            <person name="Sunamachi H."/>
            <person name="Mori Y."/>
            <person name="Nagaike K."/>
            <person name="Takahashi M."/>
            <person name="Yamanishi K."/>
        </authorList>
    </citation>
    <scope>NUCLEOTIDE SEQUENCE [LARGE SCALE GENOMIC DNA]</scope>
    <source>
        <strain>Isolate Human/Japan/P-Oka/1970</strain>
        <strain>Oka varicella vaccine Biken (V-Oka-Biken)</strain>
    </source>
</reference>
<reference key="4">
    <citation type="journal article" date="2008" name="J. Virol.">
        <title>Complete DNA sequences of two oka strain varicella-zoster virus genomes.</title>
        <authorList>
            <person name="Tillieux S.L."/>
            <person name="Halsey W.S."/>
            <person name="Thomas E.S."/>
            <person name="Voycik J.J."/>
            <person name="Sathe G.M."/>
            <person name="Vassilev V."/>
        </authorList>
    </citation>
    <scope>NUCLEOTIDE SEQUENCE [LARGE SCALE GENOMIC DNA]</scope>
    <source>
        <strain>Oka varicella vaccine VarilRix (V-Oka-GSK)</strain>
        <strain>Oka varicella vaccine Varivax (V-Oka-Merck)</strain>
    </source>
</reference>
<sequence>MASHKWLLQMIVFLKTITIAYCLHLQDDTPLFFGAKPLSDVSLIITEPCVSSVYEAWDYAAPPVSNLSEALSGIVVKTKCPVPEVILWFKDKQMAYWTNPYVTLKGLTQSVGEEHKSGDIRDALLDALSGVWVDSTPSSTNIPENGCVWGADRLFQRVCQ</sequence>
<keyword id="KW-0002">3D-structure</keyword>
<keyword id="KW-1015">Disulfide bond</keyword>
<keyword id="KW-1169">Fusion of virus membrane with host cell membrane</keyword>
<keyword id="KW-1168">Fusion of virus membrane with host membrane</keyword>
<keyword id="KW-0325">Glycoprotein</keyword>
<keyword id="KW-1032">Host cell membrane</keyword>
<keyword id="KW-1040">Host Golgi apparatus</keyword>
<keyword id="KW-1043">Host membrane</keyword>
<keyword id="KW-0472">Membrane</keyword>
<keyword id="KW-0732">Signal</keyword>
<keyword id="KW-0261">Viral envelope protein</keyword>
<keyword id="KW-1162">Viral penetration into host cytoplasm</keyword>
<keyword id="KW-0946">Virion</keyword>
<keyword id="KW-1160">Virus entry into host cell</keyword>
<proteinExistence type="evidence at protein level"/>
<accession>Q9J3N1</accession>
<comment type="function">
    <text evidence="1">The heterodimer glycoprotein H-glycoprotein L is required for the fusion of viral and plasma membranes leading to virus entry into the host cell. Acts as a functional inhibitor of gH and maintains gH in an inhibited form. Upon binding to host integrins, gL dissociates from gH leading to activation of the viral fusion glycoproteins gB and gH.</text>
</comment>
<comment type="subunit">
    <text evidence="1">Interacts with glycoprotein H (gH); this interaction is necessary for the correct processing and cell surface expression of gH. The heterodimer gH/gL seems to interact with gB trimers during fusion.</text>
</comment>
<comment type="subcellular location">
    <subcellularLocation>
        <location evidence="1">Virion membrane</location>
        <topology evidence="1">Peripheral membrane protein</topology>
        <orientation evidence="1">Extracellular side</orientation>
    </subcellularLocation>
    <subcellularLocation>
        <location evidence="1">Host cell membrane</location>
        <topology evidence="1">Peripheral membrane protein</topology>
        <orientation evidence="1">Extracellular side</orientation>
    </subcellularLocation>
    <subcellularLocation>
        <location evidence="1">Host Golgi apparatus</location>
        <location evidence="1">Host trans-Golgi network</location>
    </subcellularLocation>
    <text evidence="1">gL associates with the extravirion surface through its binding to gH. During virion morphogenesis, this protein probably accumulates in the host trans-Golgi where secondary envelopment occurs.</text>
</comment>
<comment type="similarity">
    <text evidence="2">Belongs to the herpesviridae glycoprotein L (gL) family. Alphaherpesvirinae gL subfamily.</text>
</comment>
<organismHost>
    <name type="scientific">Homo sapiens</name>
    <name type="common">Human</name>
    <dbReference type="NCBI Taxonomy" id="9606"/>
</organismHost>
<protein>
    <recommendedName>
        <fullName evidence="1">Envelope glycoprotein L</fullName>
        <shortName evidence="1">gL</shortName>
    </recommendedName>
</protein>